<reference key="1">
    <citation type="submission" date="2007-03" db="EMBL/GenBank/DDBJ databases">
        <title>Complete sequence of chromosome of Methanococcus maripaludis C5.</title>
        <authorList>
            <consortium name="US DOE Joint Genome Institute"/>
            <person name="Copeland A."/>
            <person name="Lucas S."/>
            <person name="Lapidus A."/>
            <person name="Barry K."/>
            <person name="Glavina del Rio T."/>
            <person name="Dalin E."/>
            <person name="Tice H."/>
            <person name="Pitluck S."/>
            <person name="Chertkov O."/>
            <person name="Brettin T."/>
            <person name="Bruce D."/>
            <person name="Han C."/>
            <person name="Detter J.C."/>
            <person name="Schmutz J."/>
            <person name="Larimer F."/>
            <person name="Land M."/>
            <person name="Hauser L."/>
            <person name="Kyrpides N."/>
            <person name="Mikhailova N."/>
            <person name="Sieprawska-Lupa M."/>
            <person name="Whitman W.B."/>
            <person name="Richardson P."/>
        </authorList>
    </citation>
    <scope>NUCLEOTIDE SEQUENCE [LARGE SCALE GENOMIC DNA]</scope>
    <source>
        <strain>C5 / ATCC BAA-1333</strain>
    </source>
</reference>
<name>CARA_METM5</name>
<proteinExistence type="inferred from homology"/>
<evidence type="ECO:0000255" key="1">
    <source>
        <dbReference type="HAMAP-Rule" id="MF_01209"/>
    </source>
</evidence>
<accession>A4G0Y3</accession>
<dbReference type="EC" id="6.3.5.5" evidence="1"/>
<dbReference type="EMBL" id="CP000609">
    <property type="protein sequence ID" value="ABO36117.1"/>
    <property type="molecule type" value="Genomic_DNA"/>
</dbReference>
<dbReference type="RefSeq" id="WP_011869562.1">
    <property type="nucleotide sequence ID" value="NC_009135.1"/>
</dbReference>
<dbReference type="SMR" id="A4G0Y3"/>
<dbReference type="STRING" id="402880.MmarC5_1820"/>
<dbReference type="GeneID" id="4927889"/>
<dbReference type="KEGG" id="mmq:MmarC5_1820"/>
<dbReference type="eggNOG" id="arCOG00064">
    <property type="taxonomic scope" value="Archaea"/>
</dbReference>
<dbReference type="HOGENOM" id="CLU_035901_2_1_2"/>
<dbReference type="OrthoDB" id="7675at2157"/>
<dbReference type="UniPathway" id="UPA00068">
    <property type="reaction ID" value="UER00171"/>
</dbReference>
<dbReference type="UniPathway" id="UPA00070">
    <property type="reaction ID" value="UER00115"/>
</dbReference>
<dbReference type="Proteomes" id="UP000000253">
    <property type="component" value="Chromosome"/>
</dbReference>
<dbReference type="GO" id="GO:0005524">
    <property type="term" value="F:ATP binding"/>
    <property type="evidence" value="ECO:0007669"/>
    <property type="project" value="UniProtKB-UniRule"/>
</dbReference>
<dbReference type="GO" id="GO:0004088">
    <property type="term" value="F:carbamoyl-phosphate synthase (glutamine-hydrolyzing) activity"/>
    <property type="evidence" value="ECO:0007669"/>
    <property type="project" value="UniProtKB-UniRule"/>
</dbReference>
<dbReference type="GO" id="GO:0004359">
    <property type="term" value="F:glutaminase activity"/>
    <property type="evidence" value="ECO:0007669"/>
    <property type="project" value="RHEA"/>
</dbReference>
<dbReference type="GO" id="GO:0006207">
    <property type="term" value="P:'de novo' pyrimidine nucleobase biosynthetic process"/>
    <property type="evidence" value="ECO:0007669"/>
    <property type="project" value="InterPro"/>
</dbReference>
<dbReference type="GO" id="GO:0044205">
    <property type="term" value="P:'de novo' UMP biosynthetic process"/>
    <property type="evidence" value="ECO:0007669"/>
    <property type="project" value="UniProtKB-UniRule"/>
</dbReference>
<dbReference type="GO" id="GO:0006541">
    <property type="term" value="P:glutamine metabolic process"/>
    <property type="evidence" value="ECO:0007669"/>
    <property type="project" value="InterPro"/>
</dbReference>
<dbReference type="GO" id="GO:0006526">
    <property type="term" value="P:L-arginine biosynthetic process"/>
    <property type="evidence" value="ECO:0007669"/>
    <property type="project" value="UniProtKB-UniRule"/>
</dbReference>
<dbReference type="CDD" id="cd01744">
    <property type="entry name" value="GATase1_CPSase"/>
    <property type="match status" value="1"/>
</dbReference>
<dbReference type="Gene3D" id="3.40.50.880">
    <property type="match status" value="1"/>
</dbReference>
<dbReference type="Gene3D" id="3.50.30.20">
    <property type="entry name" value="Carbamoyl-phosphate synthase small subunit, N-terminal domain"/>
    <property type="match status" value="1"/>
</dbReference>
<dbReference type="HAMAP" id="MF_01209">
    <property type="entry name" value="CPSase_S_chain"/>
    <property type="match status" value="1"/>
</dbReference>
<dbReference type="InterPro" id="IPR050472">
    <property type="entry name" value="Anth_synth/Amidotransfase"/>
</dbReference>
<dbReference type="InterPro" id="IPR006274">
    <property type="entry name" value="CarbamoylP_synth_ssu"/>
</dbReference>
<dbReference type="InterPro" id="IPR002474">
    <property type="entry name" value="CarbamoylP_synth_ssu_N"/>
</dbReference>
<dbReference type="InterPro" id="IPR036480">
    <property type="entry name" value="CarbP_synth_ssu_N_sf"/>
</dbReference>
<dbReference type="InterPro" id="IPR029062">
    <property type="entry name" value="Class_I_gatase-like"/>
</dbReference>
<dbReference type="InterPro" id="IPR035686">
    <property type="entry name" value="CPSase_GATase1"/>
</dbReference>
<dbReference type="InterPro" id="IPR017926">
    <property type="entry name" value="GATASE"/>
</dbReference>
<dbReference type="NCBIfam" id="TIGR01368">
    <property type="entry name" value="CPSaseIIsmall"/>
    <property type="match status" value="1"/>
</dbReference>
<dbReference type="NCBIfam" id="NF009475">
    <property type="entry name" value="PRK12838.1"/>
    <property type="match status" value="1"/>
</dbReference>
<dbReference type="PANTHER" id="PTHR43418:SF7">
    <property type="entry name" value="CARBAMOYL-PHOSPHATE SYNTHASE SMALL CHAIN"/>
    <property type="match status" value="1"/>
</dbReference>
<dbReference type="PANTHER" id="PTHR43418">
    <property type="entry name" value="MULTIFUNCTIONAL TRYPTOPHAN BIOSYNTHESIS PROTEIN-RELATED"/>
    <property type="match status" value="1"/>
</dbReference>
<dbReference type="Pfam" id="PF00988">
    <property type="entry name" value="CPSase_sm_chain"/>
    <property type="match status" value="1"/>
</dbReference>
<dbReference type="Pfam" id="PF00117">
    <property type="entry name" value="GATase"/>
    <property type="match status" value="1"/>
</dbReference>
<dbReference type="PRINTS" id="PR00097">
    <property type="entry name" value="ANTSNTHASEII"/>
</dbReference>
<dbReference type="PRINTS" id="PR00099">
    <property type="entry name" value="CPSGATASE"/>
</dbReference>
<dbReference type="PRINTS" id="PR00096">
    <property type="entry name" value="GATASE"/>
</dbReference>
<dbReference type="SMART" id="SM01097">
    <property type="entry name" value="CPSase_sm_chain"/>
    <property type="match status" value="1"/>
</dbReference>
<dbReference type="SUPFAM" id="SSF52021">
    <property type="entry name" value="Carbamoyl phosphate synthetase, small subunit N-terminal domain"/>
    <property type="match status" value="1"/>
</dbReference>
<dbReference type="SUPFAM" id="SSF52317">
    <property type="entry name" value="Class I glutamine amidotransferase-like"/>
    <property type="match status" value="1"/>
</dbReference>
<dbReference type="PROSITE" id="PS51273">
    <property type="entry name" value="GATASE_TYPE_1"/>
    <property type="match status" value="1"/>
</dbReference>
<comment type="function">
    <text evidence="1">Small subunit of the glutamine-dependent carbamoyl phosphate synthetase (CPSase). CPSase catalyzes the formation of carbamoyl phosphate from the ammonia moiety of glutamine, carbonate, and phosphate donated by ATP, constituting the first step of 2 biosynthetic pathways, one leading to arginine and/or urea and the other to pyrimidine nucleotides. The small subunit (glutamine amidotransferase) binds and cleaves glutamine to supply the large subunit with the substrate ammonia.</text>
</comment>
<comment type="catalytic activity">
    <reaction evidence="1">
        <text>hydrogencarbonate + L-glutamine + 2 ATP + H2O = carbamoyl phosphate + L-glutamate + 2 ADP + phosphate + 2 H(+)</text>
        <dbReference type="Rhea" id="RHEA:18633"/>
        <dbReference type="ChEBI" id="CHEBI:15377"/>
        <dbReference type="ChEBI" id="CHEBI:15378"/>
        <dbReference type="ChEBI" id="CHEBI:17544"/>
        <dbReference type="ChEBI" id="CHEBI:29985"/>
        <dbReference type="ChEBI" id="CHEBI:30616"/>
        <dbReference type="ChEBI" id="CHEBI:43474"/>
        <dbReference type="ChEBI" id="CHEBI:58228"/>
        <dbReference type="ChEBI" id="CHEBI:58359"/>
        <dbReference type="ChEBI" id="CHEBI:456216"/>
        <dbReference type="EC" id="6.3.5.5"/>
    </reaction>
</comment>
<comment type="catalytic activity">
    <molecule>Carbamoyl phosphate synthase small chain</molecule>
    <reaction evidence="1">
        <text>L-glutamine + H2O = L-glutamate + NH4(+)</text>
        <dbReference type="Rhea" id="RHEA:15889"/>
        <dbReference type="ChEBI" id="CHEBI:15377"/>
        <dbReference type="ChEBI" id="CHEBI:28938"/>
        <dbReference type="ChEBI" id="CHEBI:29985"/>
        <dbReference type="ChEBI" id="CHEBI:58359"/>
    </reaction>
</comment>
<comment type="pathway">
    <text evidence="1">Amino-acid biosynthesis; L-arginine biosynthesis; carbamoyl phosphate from bicarbonate: step 1/1.</text>
</comment>
<comment type="pathway">
    <text evidence="1">Pyrimidine metabolism; UMP biosynthesis via de novo pathway; (S)-dihydroorotate from bicarbonate: step 1/3.</text>
</comment>
<comment type="subunit">
    <text evidence="1">Composed of two chains; the small (or glutamine) chain promotes the hydrolysis of glutamine to ammonia, which is used by the large (or ammonia) chain to synthesize carbamoyl phosphate. Tetramer of heterodimers (alpha,beta)4.</text>
</comment>
<comment type="similarity">
    <text evidence="1">Belongs to the CarA family.</text>
</comment>
<keyword id="KW-0028">Amino-acid biosynthesis</keyword>
<keyword id="KW-0055">Arginine biosynthesis</keyword>
<keyword id="KW-0067">ATP-binding</keyword>
<keyword id="KW-0315">Glutamine amidotransferase</keyword>
<keyword id="KW-0436">Ligase</keyword>
<keyword id="KW-0547">Nucleotide-binding</keyword>
<keyword id="KW-0665">Pyrimidine biosynthesis</keyword>
<protein>
    <recommendedName>
        <fullName evidence="1">Carbamoyl phosphate synthase small chain</fullName>
        <ecNumber evidence="1">6.3.5.5</ecNumber>
    </recommendedName>
    <alternativeName>
        <fullName evidence="1">Carbamoyl phosphate synthetase glutamine chain</fullName>
    </alternativeName>
</protein>
<sequence>MYGILVLEDGTIIRGDGFGAETEVLGELVFNTSMTGYVEILTDPSYKGQIVTMTYPLEGNYGVEKEWFESDGIKAEGFVVKDMTGSKLDEFLKEYNIPGISGVDTRYITRKIRSKGVIRSLLKTSTNPITKDEETELIKKVVEYPDISEIDLVPEVSTKETVIYNAEDEKTRCVLIDCGVKQSIIDCLVERGCSVVKVPYNSKEEEIMSYNPDFVLVSNGPGDPENMAETVETVKNLIGTLPVTGICLGHQLITIALGGKTYKLKFGHRGGNQPVKDIDSGKVYITSQNHGFATDDKIVPEGSELMHMNLNDDTVEGIRKIESNDLKNTVWSVQYHPEAGPGPHDARFLFDEMVELGIKFKAEKAN</sequence>
<feature type="chain" id="PRO_1000138867" description="Carbamoyl phosphate synthase small chain">
    <location>
        <begin position="1"/>
        <end position="366"/>
    </location>
</feature>
<feature type="domain" description="Glutamine amidotransferase type-1" evidence="1">
    <location>
        <begin position="172"/>
        <end position="363"/>
    </location>
</feature>
<feature type="region of interest" description="CPSase" evidence="1">
    <location>
        <begin position="1"/>
        <end position="168"/>
    </location>
</feature>
<feature type="active site" description="Nucleophile" evidence="1">
    <location>
        <position position="247"/>
    </location>
</feature>
<feature type="active site" evidence="1">
    <location>
        <position position="336"/>
    </location>
</feature>
<feature type="active site" evidence="1">
    <location>
        <position position="338"/>
    </location>
</feature>
<feature type="binding site" evidence="1">
    <location>
        <position position="45"/>
    </location>
    <ligand>
        <name>L-glutamine</name>
        <dbReference type="ChEBI" id="CHEBI:58359"/>
    </ligand>
</feature>
<feature type="binding site" evidence="1">
    <location>
        <position position="220"/>
    </location>
    <ligand>
        <name>L-glutamine</name>
        <dbReference type="ChEBI" id="CHEBI:58359"/>
    </ligand>
</feature>
<feature type="binding site" evidence="1">
    <location>
        <position position="222"/>
    </location>
    <ligand>
        <name>L-glutamine</name>
        <dbReference type="ChEBI" id="CHEBI:58359"/>
    </ligand>
</feature>
<feature type="binding site" evidence="1">
    <location>
        <position position="248"/>
    </location>
    <ligand>
        <name>L-glutamine</name>
        <dbReference type="ChEBI" id="CHEBI:58359"/>
    </ligand>
</feature>
<feature type="binding site" evidence="1">
    <location>
        <position position="251"/>
    </location>
    <ligand>
        <name>L-glutamine</name>
        <dbReference type="ChEBI" id="CHEBI:58359"/>
    </ligand>
</feature>
<feature type="binding site" evidence="1">
    <location>
        <position position="289"/>
    </location>
    <ligand>
        <name>L-glutamine</name>
        <dbReference type="ChEBI" id="CHEBI:58359"/>
    </ligand>
</feature>
<feature type="binding site" evidence="1">
    <location>
        <position position="291"/>
    </location>
    <ligand>
        <name>L-glutamine</name>
        <dbReference type="ChEBI" id="CHEBI:58359"/>
    </ligand>
</feature>
<feature type="binding site" evidence="1">
    <location>
        <position position="292"/>
    </location>
    <ligand>
        <name>L-glutamine</name>
        <dbReference type="ChEBI" id="CHEBI:58359"/>
    </ligand>
</feature>
<gene>
    <name evidence="1" type="primary">carA</name>
    <name type="ordered locus">MmarC5_1820</name>
</gene>
<organism>
    <name type="scientific">Methanococcus maripaludis (strain C5 / ATCC BAA-1333)</name>
    <dbReference type="NCBI Taxonomy" id="402880"/>
    <lineage>
        <taxon>Archaea</taxon>
        <taxon>Methanobacteriati</taxon>
        <taxon>Methanobacteriota</taxon>
        <taxon>Methanomada group</taxon>
        <taxon>Methanococci</taxon>
        <taxon>Methanococcales</taxon>
        <taxon>Methanococcaceae</taxon>
        <taxon>Methanococcus</taxon>
    </lineage>
</organism>